<name>DTD_STAA1</name>
<feature type="chain" id="PRO_1000050892" description="D-aminoacyl-tRNA deacylase">
    <location>
        <begin position="1"/>
        <end position="150"/>
    </location>
</feature>
<feature type="short sequence motif" description="Gly-cisPro motif, important for rejection of L-amino acids" evidence="1">
    <location>
        <begin position="136"/>
        <end position="137"/>
    </location>
</feature>
<keyword id="KW-0963">Cytoplasm</keyword>
<keyword id="KW-0378">Hydrolase</keyword>
<keyword id="KW-0694">RNA-binding</keyword>
<keyword id="KW-0820">tRNA-binding</keyword>
<gene>
    <name evidence="1" type="primary">dtd</name>
    <name type="ordered locus">SAHV_1620</name>
</gene>
<reference key="1">
    <citation type="journal article" date="2008" name="Antimicrob. Agents Chemother.">
        <title>Mutated response regulator graR is responsible for phenotypic conversion of Staphylococcus aureus from heterogeneous vancomycin-intermediate resistance to vancomycin-intermediate resistance.</title>
        <authorList>
            <person name="Neoh H.-M."/>
            <person name="Cui L."/>
            <person name="Yuzawa H."/>
            <person name="Takeuchi F."/>
            <person name="Matsuo M."/>
            <person name="Hiramatsu K."/>
        </authorList>
    </citation>
    <scope>NUCLEOTIDE SEQUENCE [LARGE SCALE GENOMIC DNA]</scope>
    <source>
        <strain>Mu3 / ATCC 700698</strain>
    </source>
</reference>
<evidence type="ECO:0000255" key="1">
    <source>
        <dbReference type="HAMAP-Rule" id="MF_00518"/>
    </source>
</evidence>
<sequence length="150" mass="16697">MKVVVQRVKEASVTNDTLNNQIKKGYCLLVGIGQNSTEQDADVIAKKIANARLFEDDNNKLNFNIQQMNGEILSVSQFTLYADVKKGNRPGFSNSKNPDQAVKIYEYFNDALRAYGLTVKTGEFGTHMNVSINNDGPVTIIYESQDGKIQ</sequence>
<dbReference type="EC" id="3.1.1.96" evidence="1"/>
<dbReference type="EMBL" id="AP009324">
    <property type="protein sequence ID" value="BAF78503.1"/>
    <property type="molecule type" value="Genomic_DNA"/>
</dbReference>
<dbReference type="RefSeq" id="WP_000869983.1">
    <property type="nucleotide sequence ID" value="NZ_CTYB01000003.1"/>
</dbReference>
<dbReference type="SMR" id="A7X347"/>
<dbReference type="KEGG" id="saw:SAHV_1620"/>
<dbReference type="HOGENOM" id="CLU_076901_1_0_9"/>
<dbReference type="GO" id="GO:0005737">
    <property type="term" value="C:cytoplasm"/>
    <property type="evidence" value="ECO:0007669"/>
    <property type="project" value="UniProtKB-SubCell"/>
</dbReference>
<dbReference type="GO" id="GO:0051500">
    <property type="term" value="F:D-tyrosyl-tRNA(Tyr) deacylase activity"/>
    <property type="evidence" value="ECO:0007669"/>
    <property type="project" value="TreeGrafter"/>
</dbReference>
<dbReference type="GO" id="GO:0106026">
    <property type="term" value="F:Gly-tRNA(Ala) deacylase activity"/>
    <property type="evidence" value="ECO:0007669"/>
    <property type="project" value="UniProtKB-UniRule"/>
</dbReference>
<dbReference type="GO" id="GO:0043908">
    <property type="term" value="F:Ser(Gly)-tRNA(Ala) hydrolase activity"/>
    <property type="evidence" value="ECO:0007669"/>
    <property type="project" value="UniProtKB-UniRule"/>
</dbReference>
<dbReference type="GO" id="GO:0000049">
    <property type="term" value="F:tRNA binding"/>
    <property type="evidence" value="ECO:0007669"/>
    <property type="project" value="UniProtKB-UniRule"/>
</dbReference>
<dbReference type="GO" id="GO:0019478">
    <property type="term" value="P:D-amino acid catabolic process"/>
    <property type="evidence" value="ECO:0007669"/>
    <property type="project" value="UniProtKB-UniRule"/>
</dbReference>
<dbReference type="FunFam" id="3.50.80.10:FF:000005">
    <property type="entry name" value="D-aminoacyl-tRNA deacylase"/>
    <property type="match status" value="1"/>
</dbReference>
<dbReference type="Gene3D" id="3.50.80.10">
    <property type="entry name" value="D-tyrosyl-tRNA(Tyr) deacylase"/>
    <property type="match status" value="1"/>
</dbReference>
<dbReference type="HAMAP" id="MF_00518">
    <property type="entry name" value="Deacylase_Dtd"/>
    <property type="match status" value="1"/>
</dbReference>
<dbReference type="InterPro" id="IPR003732">
    <property type="entry name" value="Daa-tRNA_deacyls_DTD"/>
</dbReference>
<dbReference type="InterPro" id="IPR023509">
    <property type="entry name" value="DTD-like_sf"/>
</dbReference>
<dbReference type="NCBIfam" id="TIGR00256">
    <property type="entry name" value="D-aminoacyl-tRNA deacylase"/>
    <property type="match status" value="1"/>
</dbReference>
<dbReference type="PANTHER" id="PTHR10472:SF5">
    <property type="entry name" value="D-AMINOACYL-TRNA DEACYLASE 1"/>
    <property type="match status" value="1"/>
</dbReference>
<dbReference type="PANTHER" id="PTHR10472">
    <property type="entry name" value="D-TYROSYL-TRNA TYR DEACYLASE"/>
    <property type="match status" value="1"/>
</dbReference>
<dbReference type="Pfam" id="PF02580">
    <property type="entry name" value="Tyr_Deacylase"/>
    <property type="match status" value="1"/>
</dbReference>
<dbReference type="SUPFAM" id="SSF69500">
    <property type="entry name" value="DTD-like"/>
    <property type="match status" value="1"/>
</dbReference>
<proteinExistence type="inferred from homology"/>
<protein>
    <recommendedName>
        <fullName evidence="1">D-aminoacyl-tRNA deacylase</fullName>
        <shortName evidence="1">DTD</shortName>
        <ecNumber evidence="1">3.1.1.96</ecNumber>
    </recommendedName>
    <alternativeName>
        <fullName evidence="1">Gly-tRNA(Ala) deacylase</fullName>
    </alternativeName>
</protein>
<accession>A7X347</accession>
<comment type="function">
    <text evidence="1">An aminoacyl-tRNA editing enzyme that deacylates mischarged D-aminoacyl-tRNAs. Also deacylates mischarged glycyl-tRNA(Ala), protecting cells against glycine mischarging by AlaRS. Acts via tRNA-based rather than protein-based catalysis; rejects L-amino acids rather than detecting D-amino acids in the active site. By recycling D-aminoacyl-tRNA to D-amino acids and free tRNA molecules, this enzyme counteracts the toxicity associated with the formation of D-aminoacyl-tRNA entities in vivo and helps enforce protein L-homochirality.</text>
</comment>
<comment type="catalytic activity">
    <reaction evidence="1">
        <text>glycyl-tRNA(Ala) + H2O = tRNA(Ala) + glycine + H(+)</text>
        <dbReference type="Rhea" id="RHEA:53744"/>
        <dbReference type="Rhea" id="RHEA-COMP:9657"/>
        <dbReference type="Rhea" id="RHEA-COMP:13640"/>
        <dbReference type="ChEBI" id="CHEBI:15377"/>
        <dbReference type="ChEBI" id="CHEBI:15378"/>
        <dbReference type="ChEBI" id="CHEBI:57305"/>
        <dbReference type="ChEBI" id="CHEBI:78442"/>
        <dbReference type="ChEBI" id="CHEBI:78522"/>
        <dbReference type="EC" id="3.1.1.96"/>
    </reaction>
</comment>
<comment type="catalytic activity">
    <reaction evidence="1">
        <text>a D-aminoacyl-tRNA + H2O = a tRNA + a D-alpha-amino acid + H(+)</text>
        <dbReference type="Rhea" id="RHEA:13953"/>
        <dbReference type="Rhea" id="RHEA-COMP:10123"/>
        <dbReference type="Rhea" id="RHEA-COMP:10124"/>
        <dbReference type="ChEBI" id="CHEBI:15377"/>
        <dbReference type="ChEBI" id="CHEBI:15378"/>
        <dbReference type="ChEBI" id="CHEBI:59871"/>
        <dbReference type="ChEBI" id="CHEBI:78442"/>
        <dbReference type="ChEBI" id="CHEBI:79333"/>
        <dbReference type="EC" id="3.1.1.96"/>
    </reaction>
</comment>
<comment type="subunit">
    <text evidence="1">Homodimer.</text>
</comment>
<comment type="subcellular location">
    <subcellularLocation>
        <location evidence="1">Cytoplasm</location>
    </subcellularLocation>
</comment>
<comment type="domain">
    <text evidence="1">A Gly-cisPro motif from one monomer fits into the active site of the other monomer to allow specific chiral rejection of L-amino acids.</text>
</comment>
<comment type="similarity">
    <text evidence="1">Belongs to the DTD family.</text>
</comment>
<organism>
    <name type="scientific">Staphylococcus aureus (strain Mu3 / ATCC 700698)</name>
    <dbReference type="NCBI Taxonomy" id="418127"/>
    <lineage>
        <taxon>Bacteria</taxon>
        <taxon>Bacillati</taxon>
        <taxon>Bacillota</taxon>
        <taxon>Bacilli</taxon>
        <taxon>Bacillales</taxon>
        <taxon>Staphylococcaceae</taxon>
        <taxon>Staphylococcus</taxon>
    </lineage>
</organism>